<organism>
    <name type="scientific">Haloarcula marismortui (strain ATCC 43049 / DSM 3752 / JCM 8966 / VKM B-1809)</name>
    <name type="common">Halobacterium marismortui</name>
    <dbReference type="NCBI Taxonomy" id="272569"/>
    <lineage>
        <taxon>Archaea</taxon>
        <taxon>Methanobacteriati</taxon>
        <taxon>Methanobacteriota</taxon>
        <taxon>Stenosarchaea group</taxon>
        <taxon>Halobacteria</taxon>
        <taxon>Halobacteriales</taxon>
        <taxon>Haloarculaceae</taxon>
        <taxon>Haloarcula</taxon>
    </lineage>
</organism>
<name>CDC6B_HALMA</name>
<feature type="chain" id="PRO_0000150989" description="ORC1-type DNA replication protein 2">
    <location>
        <begin position="1"/>
        <end position="412"/>
    </location>
</feature>
<feature type="binding site" evidence="1">
    <location>
        <begin position="61"/>
        <end position="65"/>
    </location>
    <ligand>
        <name>ATP</name>
        <dbReference type="ChEBI" id="CHEBI:30616"/>
    </ligand>
</feature>
<feature type="binding site" evidence="1">
    <location>
        <position position="207"/>
    </location>
    <ligand>
        <name>ATP</name>
        <dbReference type="ChEBI" id="CHEBI:30616"/>
    </ligand>
</feature>
<feature type="binding site" evidence="1">
    <location>
        <position position="219"/>
    </location>
    <ligand>
        <name>ATP</name>
        <dbReference type="ChEBI" id="CHEBI:30616"/>
    </ligand>
</feature>
<accession>Q5UWY4</accession>
<evidence type="ECO:0000255" key="1">
    <source>
        <dbReference type="HAMAP-Rule" id="MF_01407"/>
    </source>
</evidence>
<comment type="function">
    <text evidence="1">Involved in regulation of DNA replication.</text>
</comment>
<comment type="similarity">
    <text evidence="1">Belongs to the CDC6/cdc18 family.</text>
</comment>
<proteinExistence type="inferred from homology"/>
<sequence>MGPRFQPDDTLYKRRNTLKVEYVPDDIVGRDNEIEEYEAALQPIINGEYPDNIFIYGKTGVGKTAVTNFLLNELRESADHFEVDLTVISLNCDGLSTSYQAAISLVNNLRGHENHIAETGHPQSKVYRLLWNELNKLSGSVIIVLDEIDHITDDTFLYQITRADNNGYIDNIQLGVIGISNDSTFREQLDAKVQSSLCETEISFPPYGTEELQKVLEQRAEIAFHESALEDGVIPLCAALGRQDGGDARRAITLLRKAGDLARTENANSVTTDHVERAQEKLEAQQSMDIMRDLTEHEQLTLYALTTLAAEGETPARSRIVYQRYKELCEFQGREPRTARRMRSFLSDFEILNLTLSEMEHRGQDGGTYRQHELNRDIATVVDALQTIIGEFGAHQSIIEYLPDSGEEFATM</sequence>
<gene>
    <name type="primary">cdc6b</name>
    <name type="ordered locus">rrnB0004</name>
</gene>
<protein>
    <recommendedName>
        <fullName evidence="1">ORC1-type DNA replication protein 2</fullName>
    </recommendedName>
</protein>
<keyword id="KW-0067">ATP-binding</keyword>
<keyword id="KW-0235">DNA replication</keyword>
<keyword id="KW-0547">Nucleotide-binding</keyword>
<keyword id="KW-1185">Reference proteome</keyword>
<reference key="1">
    <citation type="journal article" date="2004" name="Genome Res.">
        <title>Genome sequence of Haloarcula marismortui: a halophilic archaeon from the Dead Sea.</title>
        <authorList>
            <person name="Baliga N.S."/>
            <person name="Bonneau R."/>
            <person name="Facciotti M.T."/>
            <person name="Pan M."/>
            <person name="Glusman G."/>
            <person name="Deutsch E.W."/>
            <person name="Shannon P."/>
            <person name="Chiu Y."/>
            <person name="Weng R.S."/>
            <person name="Gan R.R."/>
            <person name="Hung P."/>
            <person name="Date S.V."/>
            <person name="Marcotte E."/>
            <person name="Hood L."/>
            <person name="Ng W.V."/>
        </authorList>
    </citation>
    <scope>NUCLEOTIDE SEQUENCE [LARGE SCALE GENOMIC DNA]</scope>
    <source>
        <strain>ATCC 43049 / DSM 3752 / JCM 8966 / VKM B-1809</strain>
    </source>
</reference>
<dbReference type="EMBL" id="AY596298">
    <property type="protein sequence ID" value="AAV48219.1"/>
    <property type="molecule type" value="Genomic_DNA"/>
</dbReference>
<dbReference type="RefSeq" id="WP_004966666.1">
    <property type="nucleotide sequence ID" value="NZ_CP039136.1"/>
</dbReference>
<dbReference type="SMR" id="Q5UWY4"/>
<dbReference type="STRING" id="272569.rrnB0004"/>
<dbReference type="PaxDb" id="272569-rrnB0004"/>
<dbReference type="EnsemblBacteria" id="AAV48219">
    <property type="protein sequence ID" value="AAV48219"/>
    <property type="gene ID" value="rrnB0004"/>
</dbReference>
<dbReference type="KEGG" id="hma:rrnB0004"/>
<dbReference type="PATRIC" id="fig|272569.17.peg.4055"/>
<dbReference type="eggNOG" id="arCOG00467">
    <property type="taxonomic scope" value="Archaea"/>
</dbReference>
<dbReference type="HOGENOM" id="CLU_025112_3_1_2"/>
<dbReference type="Proteomes" id="UP000001169">
    <property type="component" value="Chromosome II"/>
</dbReference>
<dbReference type="GO" id="GO:0005524">
    <property type="term" value="F:ATP binding"/>
    <property type="evidence" value="ECO:0007669"/>
    <property type="project" value="UniProtKB-UniRule"/>
</dbReference>
<dbReference type="GO" id="GO:0016887">
    <property type="term" value="F:ATP hydrolysis activity"/>
    <property type="evidence" value="ECO:0007669"/>
    <property type="project" value="InterPro"/>
</dbReference>
<dbReference type="GO" id="GO:0006260">
    <property type="term" value="P:DNA replication"/>
    <property type="evidence" value="ECO:0007669"/>
    <property type="project" value="UniProtKB-UniRule"/>
</dbReference>
<dbReference type="CDD" id="cd00009">
    <property type="entry name" value="AAA"/>
    <property type="match status" value="1"/>
</dbReference>
<dbReference type="CDD" id="cd08768">
    <property type="entry name" value="Cdc6_C"/>
    <property type="match status" value="1"/>
</dbReference>
<dbReference type="FunFam" id="1.10.8.60:FF:000073">
    <property type="entry name" value="ORC1-type DNA replication protein"/>
    <property type="match status" value="1"/>
</dbReference>
<dbReference type="Gene3D" id="1.10.8.60">
    <property type="match status" value="1"/>
</dbReference>
<dbReference type="Gene3D" id="3.40.50.300">
    <property type="entry name" value="P-loop containing nucleotide triphosphate hydrolases"/>
    <property type="match status" value="1"/>
</dbReference>
<dbReference type="Gene3D" id="1.10.10.10">
    <property type="entry name" value="Winged helix-like DNA-binding domain superfamily/Winged helix DNA-binding domain"/>
    <property type="match status" value="1"/>
</dbReference>
<dbReference type="HAMAP" id="MF_01407">
    <property type="entry name" value="ORC1_type_DNA_replic_protein"/>
    <property type="match status" value="1"/>
</dbReference>
<dbReference type="InterPro" id="IPR003593">
    <property type="entry name" value="AAA+_ATPase"/>
</dbReference>
<dbReference type="InterPro" id="IPR049945">
    <property type="entry name" value="AAA_22"/>
</dbReference>
<dbReference type="InterPro" id="IPR015163">
    <property type="entry name" value="Cdc6_C"/>
</dbReference>
<dbReference type="InterPro" id="IPR055237">
    <property type="entry name" value="Cdc6_lid"/>
</dbReference>
<dbReference type="InterPro" id="IPR050311">
    <property type="entry name" value="ORC1/CDC6"/>
</dbReference>
<dbReference type="InterPro" id="IPR014277">
    <property type="entry name" value="Orc1/Cdc6_arc"/>
</dbReference>
<dbReference type="InterPro" id="IPR027417">
    <property type="entry name" value="P-loop_NTPase"/>
</dbReference>
<dbReference type="InterPro" id="IPR036388">
    <property type="entry name" value="WH-like_DNA-bd_sf"/>
</dbReference>
<dbReference type="InterPro" id="IPR036390">
    <property type="entry name" value="WH_DNA-bd_sf"/>
</dbReference>
<dbReference type="NCBIfam" id="TIGR02928">
    <property type="entry name" value="orc1/cdc6 family replication initiation protein"/>
    <property type="match status" value="1"/>
</dbReference>
<dbReference type="PANTHER" id="PTHR10763">
    <property type="entry name" value="CELL DIVISION CONTROL PROTEIN 6-RELATED"/>
    <property type="match status" value="1"/>
</dbReference>
<dbReference type="PANTHER" id="PTHR10763:SF22">
    <property type="entry name" value="ORC1-TYPE DNA REPLICATION PROTEIN"/>
    <property type="match status" value="1"/>
</dbReference>
<dbReference type="Pfam" id="PF13401">
    <property type="entry name" value="AAA_22"/>
    <property type="match status" value="1"/>
</dbReference>
<dbReference type="Pfam" id="PF09079">
    <property type="entry name" value="Cdc6_C"/>
    <property type="match status" value="1"/>
</dbReference>
<dbReference type="Pfam" id="PF22703">
    <property type="entry name" value="Cdc6_lid"/>
    <property type="match status" value="1"/>
</dbReference>
<dbReference type="SMART" id="SM00382">
    <property type="entry name" value="AAA"/>
    <property type="match status" value="1"/>
</dbReference>
<dbReference type="SMART" id="SM01074">
    <property type="entry name" value="Cdc6_C"/>
    <property type="match status" value="1"/>
</dbReference>
<dbReference type="SUPFAM" id="SSF52540">
    <property type="entry name" value="P-loop containing nucleoside triphosphate hydrolases"/>
    <property type="match status" value="1"/>
</dbReference>
<dbReference type="SUPFAM" id="SSF46785">
    <property type="entry name" value="Winged helix' DNA-binding domain"/>
    <property type="match status" value="1"/>
</dbReference>